<accession>O74423</accession>
<comment type="function">
    <text evidence="4">Binds to membranes enriched in phosphatidylinositol 3,5-bisphosphate (PtdIns(3,5)P2) and phosphatidylinositol 4,5-bisphosphate (PtdIns(4,5)P2). Required for endocytosis and localization of actin.</text>
</comment>
<comment type="subcellular location">
    <subcellularLocation>
        <location evidence="4">Cytoplasm</location>
    </subcellularLocation>
    <subcellularLocation>
        <location evidence="2 4">Membrane</location>
        <topology evidence="4">Peripheral membrane protein</topology>
    </subcellularLocation>
    <text>Localizes in a punctate pattern. Colocalizes with F-actin.</text>
</comment>
<comment type="similarity">
    <text evidence="6">Belongs to the epsin family.</text>
</comment>
<comment type="sequence caution" evidence="6">
    <conflict type="erroneous gene model prediction">
        <sequence resource="EMBL-CDS" id="CAA19587"/>
    </conflict>
</comment>
<organism>
    <name type="scientific">Schizosaccharomyces pombe (strain 972 / ATCC 24843)</name>
    <name type="common">Fission yeast</name>
    <dbReference type="NCBI Taxonomy" id="284812"/>
    <lineage>
        <taxon>Eukaryota</taxon>
        <taxon>Fungi</taxon>
        <taxon>Dikarya</taxon>
        <taxon>Ascomycota</taxon>
        <taxon>Taphrinomycotina</taxon>
        <taxon>Schizosaccharomycetes</taxon>
        <taxon>Schizosaccharomycetales</taxon>
        <taxon>Schizosaccharomycetaceae</taxon>
        <taxon>Schizosaccharomyces</taxon>
    </lineage>
</organism>
<proteinExistence type="evidence at protein level"/>
<name>ENT1_SCHPO</name>
<gene>
    <name type="primary">ent1</name>
    <name type="ORF">SPCC162.07</name>
</gene>
<keyword id="KW-0963">Cytoplasm</keyword>
<keyword id="KW-0254">Endocytosis</keyword>
<keyword id="KW-0446">Lipid-binding</keyword>
<keyword id="KW-0472">Membrane</keyword>
<keyword id="KW-0597">Phosphoprotein</keyword>
<keyword id="KW-1185">Reference proteome</keyword>
<keyword id="KW-0677">Repeat</keyword>
<dbReference type="EMBL" id="CU329672">
    <property type="protein sequence ID" value="CAA19587.1"/>
    <property type="status" value="ALT_SEQ"/>
    <property type="molecule type" value="Genomic_DNA"/>
</dbReference>
<dbReference type="PIR" id="T41024">
    <property type="entry name" value="T41024"/>
</dbReference>
<dbReference type="SMR" id="O74423"/>
<dbReference type="BioGRID" id="275955">
    <property type="interactions" value="4"/>
</dbReference>
<dbReference type="FunCoup" id="O74423">
    <property type="interactions" value="76"/>
</dbReference>
<dbReference type="STRING" id="284812.O74423"/>
<dbReference type="iPTMnet" id="O74423"/>
<dbReference type="PaxDb" id="4896-SPCC162.07.1"/>
<dbReference type="EnsemblFungi" id="SPCC162.07.1">
    <property type="protein sequence ID" value="SPCC162.07.1:pep"/>
    <property type="gene ID" value="SPCC162.07"/>
</dbReference>
<dbReference type="PomBase" id="SPCC162.07">
    <property type="gene designation" value="ent1"/>
</dbReference>
<dbReference type="VEuPathDB" id="FungiDB:SPCC162.07"/>
<dbReference type="eggNOG" id="KOG2056">
    <property type="taxonomic scope" value="Eukaryota"/>
</dbReference>
<dbReference type="HOGENOM" id="CLU_012678_0_0_1"/>
<dbReference type="InParanoid" id="O74423"/>
<dbReference type="Reactome" id="R-SPO-8856825">
    <property type="pathway name" value="Cargo recognition for clathrin-mediated endocytosis"/>
</dbReference>
<dbReference type="PRO" id="PR:O74423"/>
<dbReference type="Proteomes" id="UP000002485">
    <property type="component" value="Chromosome III"/>
</dbReference>
<dbReference type="GO" id="GO:0030479">
    <property type="term" value="C:actin cortical patch"/>
    <property type="evidence" value="ECO:0000314"/>
    <property type="project" value="PomBase"/>
</dbReference>
<dbReference type="GO" id="GO:0030125">
    <property type="term" value="C:clathrin vesicle coat"/>
    <property type="evidence" value="ECO:0000318"/>
    <property type="project" value="GO_Central"/>
</dbReference>
<dbReference type="GO" id="GO:0005768">
    <property type="term" value="C:endosome"/>
    <property type="evidence" value="ECO:0000318"/>
    <property type="project" value="GO_Central"/>
</dbReference>
<dbReference type="GO" id="GO:0005886">
    <property type="term" value="C:plasma membrane"/>
    <property type="evidence" value="ECO:0000318"/>
    <property type="project" value="GO_Central"/>
</dbReference>
<dbReference type="GO" id="GO:0030276">
    <property type="term" value="F:clathrin binding"/>
    <property type="evidence" value="ECO:0000318"/>
    <property type="project" value="GO_Central"/>
</dbReference>
<dbReference type="GO" id="GO:0180020">
    <property type="term" value="F:membrane bending activity"/>
    <property type="evidence" value="ECO:0000304"/>
    <property type="project" value="PomBase"/>
</dbReference>
<dbReference type="GO" id="GO:0005546">
    <property type="term" value="F:phosphatidylinositol-4,5-bisphosphate binding"/>
    <property type="evidence" value="ECO:0000314"/>
    <property type="project" value="PomBase"/>
</dbReference>
<dbReference type="GO" id="GO:0005543">
    <property type="term" value="F:phospholipid binding"/>
    <property type="evidence" value="ECO:0000318"/>
    <property type="project" value="GO_Central"/>
</dbReference>
<dbReference type="GO" id="GO:0030036">
    <property type="term" value="P:actin cytoskeleton organization"/>
    <property type="evidence" value="ECO:0000315"/>
    <property type="project" value="PomBase"/>
</dbReference>
<dbReference type="GO" id="GO:0007015">
    <property type="term" value="P:actin filament organization"/>
    <property type="evidence" value="ECO:0000318"/>
    <property type="project" value="GO_Central"/>
</dbReference>
<dbReference type="GO" id="GO:0006897">
    <property type="term" value="P:endocytosis"/>
    <property type="evidence" value="ECO:0000315"/>
    <property type="project" value="PomBase"/>
</dbReference>
<dbReference type="CDD" id="cd16991">
    <property type="entry name" value="ENTH_Ent1_Ent2"/>
    <property type="match status" value="1"/>
</dbReference>
<dbReference type="CDD" id="cd22249">
    <property type="entry name" value="UDM1_RNF168_RNF169-like"/>
    <property type="match status" value="1"/>
</dbReference>
<dbReference type="FunFam" id="1.25.40.90:FF:000006">
    <property type="entry name" value="Clathrin interactor 1"/>
    <property type="match status" value="1"/>
</dbReference>
<dbReference type="Gene3D" id="1.25.40.90">
    <property type="match status" value="1"/>
</dbReference>
<dbReference type="InterPro" id="IPR013182">
    <property type="entry name" value="DUF1720"/>
</dbReference>
<dbReference type="InterPro" id="IPR013809">
    <property type="entry name" value="ENTH"/>
</dbReference>
<dbReference type="InterPro" id="IPR008942">
    <property type="entry name" value="ENTH_VHS"/>
</dbReference>
<dbReference type="InterPro" id="IPR003903">
    <property type="entry name" value="UIM_dom"/>
</dbReference>
<dbReference type="PANTHER" id="PTHR12276:SF110">
    <property type="entry name" value="EPSIN-1-RELATED"/>
    <property type="match status" value="1"/>
</dbReference>
<dbReference type="PANTHER" id="PTHR12276">
    <property type="entry name" value="EPSIN/ENT-RELATED"/>
    <property type="match status" value="1"/>
</dbReference>
<dbReference type="Pfam" id="PF08226">
    <property type="entry name" value="DUF1720"/>
    <property type="match status" value="4"/>
</dbReference>
<dbReference type="Pfam" id="PF01417">
    <property type="entry name" value="ENTH"/>
    <property type="match status" value="1"/>
</dbReference>
<dbReference type="SMART" id="SM00273">
    <property type="entry name" value="ENTH"/>
    <property type="match status" value="1"/>
</dbReference>
<dbReference type="SMART" id="SM00726">
    <property type="entry name" value="UIM"/>
    <property type="match status" value="2"/>
</dbReference>
<dbReference type="SUPFAM" id="SSF48464">
    <property type="entry name" value="ENTH/VHS domain"/>
    <property type="match status" value="1"/>
</dbReference>
<dbReference type="PROSITE" id="PS50942">
    <property type="entry name" value="ENTH"/>
    <property type="match status" value="1"/>
</dbReference>
<dbReference type="PROSITE" id="PS50330">
    <property type="entry name" value="UIM"/>
    <property type="match status" value="2"/>
</dbReference>
<evidence type="ECO:0000255" key="1">
    <source>
        <dbReference type="PROSITE-ProRule" id="PRU00213"/>
    </source>
</evidence>
<evidence type="ECO:0000255" key="2">
    <source>
        <dbReference type="PROSITE-ProRule" id="PRU00243"/>
    </source>
</evidence>
<evidence type="ECO:0000256" key="3">
    <source>
        <dbReference type="SAM" id="MobiDB-lite"/>
    </source>
</evidence>
<evidence type="ECO:0000269" key="4">
    <source>
    </source>
</evidence>
<evidence type="ECO:0000269" key="5">
    <source>
    </source>
</evidence>
<evidence type="ECO:0000305" key="6"/>
<sequence length="702" mass="79751">MKAAVRSVKNFSKGYTDTQIKVRNATTNDSWGPSGTAMAEIAELTYDQNEMLEVMDIIDRRLNDKGKNWRHVFKSLSLLEYCLHNGSENVVRWAKDNIYIITTLREFVYVDDNGHDQGQNVRTKAKEITSLLEDEHALKEARGDSRERDRDRDRTRSSRFDDDDDDRAPYEESRLSRAPSRASRYDDDDRDHRSRRRSRSRRPGRSRSRRRSRRPSPSAEHNSAEENDPELQRVIEESKRQAEEDAKRRNMANDSEAELQKAIQLSKEEDEARQRHQREREQQEQAFMGNQQNAYQPVDFFGNPVQPQPTGFLQQQPTGFIRPQNTGFVQPQYTGFVQPQHTGFVQPQATGFMQPQRTGFVQPQATGFVQPQATGFVQPQATGFMQPQRTGFVQPQATGFMQPQRTGFVQPQATGFMQPQRTGFVQPQATGFIQPQRTGFVQPQQNGFFNPQPTGYMQPQRTGMMQPQRTGFSQPFESNNPFPVMQPQRTGFGQTPNAPMMAPNHTGYVHPQPTGLQRQTTGYTGNNNPYSRPLQSQSTGILQQQQQQSAPRLEPTKTGSNNPFAQFSNLPSQSTAPATKPMKPVRTGDDRFSNIAQAISTGNPMGTDSFGNIGLTRVPTQHTGSKFTNSAGQTIQAQATGNTHNPFQSQQATGYYKQPMQQQQNMQQPYYNQQNYNYQNQQPMQGMQQQSMQPQVGSLIDL</sequence>
<protein>
    <recommendedName>
        <fullName>Epsin-1</fullName>
    </recommendedName>
</protein>
<reference key="1">
    <citation type="journal article" date="2002" name="Nature">
        <title>The genome sequence of Schizosaccharomyces pombe.</title>
        <authorList>
            <person name="Wood V."/>
            <person name="Gwilliam R."/>
            <person name="Rajandream M.A."/>
            <person name="Lyne M.H."/>
            <person name="Lyne R."/>
            <person name="Stewart A."/>
            <person name="Sgouros J.G."/>
            <person name="Peat N."/>
            <person name="Hayles J."/>
            <person name="Baker S.G."/>
            <person name="Basham D."/>
            <person name="Bowman S."/>
            <person name="Brooks K."/>
            <person name="Brown D."/>
            <person name="Brown S."/>
            <person name="Chillingworth T."/>
            <person name="Churcher C.M."/>
            <person name="Collins M."/>
            <person name="Connor R."/>
            <person name="Cronin A."/>
            <person name="Davis P."/>
            <person name="Feltwell T."/>
            <person name="Fraser A."/>
            <person name="Gentles S."/>
            <person name="Goble A."/>
            <person name="Hamlin N."/>
            <person name="Harris D.E."/>
            <person name="Hidalgo J."/>
            <person name="Hodgson G."/>
            <person name="Holroyd S."/>
            <person name="Hornsby T."/>
            <person name="Howarth S."/>
            <person name="Huckle E.J."/>
            <person name="Hunt S."/>
            <person name="Jagels K."/>
            <person name="James K.D."/>
            <person name="Jones L."/>
            <person name="Jones M."/>
            <person name="Leather S."/>
            <person name="McDonald S."/>
            <person name="McLean J."/>
            <person name="Mooney P."/>
            <person name="Moule S."/>
            <person name="Mungall K.L."/>
            <person name="Murphy L.D."/>
            <person name="Niblett D."/>
            <person name="Odell C."/>
            <person name="Oliver K."/>
            <person name="O'Neil S."/>
            <person name="Pearson D."/>
            <person name="Quail M.A."/>
            <person name="Rabbinowitsch E."/>
            <person name="Rutherford K.M."/>
            <person name="Rutter S."/>
            <person name="Saunders D."/>
            <person name="Seeger K."/>
            <person name="Sharp S."/>
            <person name="Skelton J."/>
            <person name="Simmonds M.N."/>
            <person name="Squares R."/>
            <person name="Squares S."/>
            <person name="Stevens K."/>
            <person name="Taylor K."/>
            <person name="Taylor R.G."/>
            <person name="Tivey A."/>
            <person name="Walsh S.V."/>
            <person name="Warren T."/>
            <person name="Whitehead S."/>
            <person name="Woodward J.R."/>
            <person name="Volckaert G."/>
            <person name="Aert R."/>
            <person name="Robben J."/>
            <person name="Grymonprez B."/>
            <person name="Weltjens I."/>
            <person name="Vanstreels E."/>
            <person name="Rieger M."/>
            <person name="Schaefer M."/>
            <person name="Mueller-Auer S."/>
            <person name="Gabel C."/>
            <person name="Fuchs M."/>
            <person name="Duesterhoeft A."/>
            <person name="Fritzc C."/>
            <person name="Holzer E."/>
            <person name="Moestl D."/>
            <person name="Hilbert H."/>
            <person name="Borzym K."/>
            <person name="Langer I."/>
            <person name="Beck A."/>
            <person name="Lehrach H."/>
            <person name="Reinhardt R."/>
            <person name="Pohl T.M."/>
            <person name="Eger P."/>
            <person name="Zimmermann W."/>
            <person name="Wedler H."/>
            <person name="Wambutt R."/>
            <person name="Purnelle B."/>
            <person name="Goffeau A."/>
            <person name="Cadieu E."/>
            <person name="Dreano S."/>
            <person name="Gloux S."/>
            <person name="Lelaure V."/>
            <person name="Mottier S."/>
            <person name="Galibert F."/>
            <person name="Aves S.J."/>
            <person name="Xiang Z."/>
            <person name="Hunt C."/>
            <person name="Moore K."/>
            <person name="Hurst S.M."/>
            <person name="Lucas M."/>
            <person name="Rochet M."/>
            <person name="Gaillardin C."/>
            <person name="Tallada V.A."/>
            <person name="Garzon A."/>
            <person name="Thode G."/>
            <person name="Daga R.R."/>
            <person name="Cruzado L."/>
            <person name="Jimenez J."/>
            <person name="Sanchez M."/>
            <person name="del Rey F."/>
            <person name="Benito J."/>
            <person name="Dominguez A."/>
            <person name="Revuelta J.L."/>
            <person name="Moreno S."/>
            <person name="Armstrong J."/>
            <person name="Forsburg S.L."/>
            <person name="Cerutti L."/>
            <person name="Lowe T."/>
            <person name="McCombie W.R."/>
            <person name="Paulsen I."/>
            <person name="Potashkin J."/>
            <person name="Shpakovski G.V."/>
            <person name="Ussery D."/>
            <person name="Barrell B.G."/>
            <person name="Nurse P."/>
        </authorList>
    </citation>
    <scope>NUCLEOTIDE SEQUENCE [LARGE SCALE GENOMIC DNA]</scope>
    <source>
        <strain>972 / ATCC 24843</strain>
    </source>
</reference>
<reference key="2">
    <citation type="journal article" date="2004" name="Kobe J. Med. Sci.">
        <title>Fission yeast epsin, Ent1p is required for endocytosis and involved in actin organization.</title>
        <authorList>
            <person name="Sakamoto C."/>
            <person name="Kawamoto C."/>
            <person name="Takeuchi K."/>
            <person name="Miyamoto I."/>
            <person name="Shuntoh H."/>
        </authorList>
    </citation>
    <scope>FUNCTION</scope>
    <scope>SUBCELLULAR LOCATION</scope>
    <scope>MUTAGENESIS OF GLY-86 AND THR-103</scope>
</reference>
<reference key="3">
    <citation type="journal article" date="2008" name="J. Proteome Res.">
        <title>Phosphoproteome analysis of fission yeast.</title>
        <authorList>
            <person name="Wilson-Grady J.T."/>
            <person name="Villen J."/>
            <person name="Gygi S.P."/>
        </authorList>
    </citation>
    <scope>PHOSPHORYLATION [LARGE SCALE ANALYSIS] AT SER-212; SER-216; SER-218; SER-223; SER-255 AND THR-406</scope>
    <scope>IDENTIFICATION BY MASS SPECTROMETRY</scope>
</reference>
<reference key="4">
    <citation type="journal article" date="2014" name="Nat. Struct. Mol. Biol.">
        <title>The translational landscape of fission-yeast meiosis and sporulation.</title>
        <authorList>
            <person name="Duncan C.D."/>
            <person name="Mata J."/>
        </authorList>
    </citation>
    <scope>GENE MODEL REVISION</scope>
</reference>
<feature type="chain" id="PRO_0000074523" description="Epsin-1">
    <location>
        <begin position="1"/>
        <end position="702"/>
    </location>
</feature>
<feature type="domain" description="ENTH" evidence="2">
    <location>
        <begin position="10"/>
        <end position="142"/>
    </location>
</feature>
<feature type="domain" description="UIM 1" evidence="1">
    <location>
        <begin position="226"/>
        <end position="245"/>
    </location>
</feature>
<feature type="domain" description="UIM 2" evidence="1">
    <location>
        <begin position="254"/>
        <end position="273"/>
    </location>
</feature>
<feature type="region of interest" description="Disordered" evidence="3">
    <location>
        <begin position="136"/>
        <end position="285"/>
    </location>
</feature>
<feature type="region of interest" description="Disordered" evidence="3">
    <location>
        <begin position="504"/>
        <end position="589"/>
    </location>
</feature>
<feature type="region of interest" description="Disordered" evidence="3">
    <location>
        <begin position="683"/>
        <end position="702"/>
    </location>
</feature>
<feature type="compositionally biased region" description="Basic and acidic residues" evidence="3">
    <location>
        <begin position="136"/>
        <end position="160"/>
    </location>
</feature>
<feature type="compositionally biased region" description="Basic and acidic residues" evidence="3">
    <location>
        <begin position="183"/>
        <end position="192"/>
    </location>
</feature>
<feature type="compositionally biased region" description="Basic residues" evidence="3">
    <location>
        <begin position="193"/>
        <end position="214"/>
    </location>
</feature>
<feature type="compositionally biased region" description="Basic and acidic residues" evidence="3">
    <location>
        <begin position="230"/>
        <end position="248"/>
    </location>
</feature>
<feature type="compositionally biased region" description="Basic and acidic residues" evidence="3">
    <location>
        <begin position="266"/>
        <end position="283"/>
    </location>
</feature>
<feature type="compositionally biased region" description="Polar residues" evidence="3">
    <location>
        <begin position="514"/>
        <end position="534"/>
    </location>
</feature>
<feature type="compositionally biased region" description="Low complexity" evidence="3">
    <location>
        <begin position="535"/>
        <end position="549"/>
    </location>
</feature>
<feature type="compositionally biased region" description="Polar residues" evidence="3">
    <location>
        <begin position="557"/>
        <end position="577"/>
    </location>
</feature>
<feature type="compositionally biased region" description="Low complexity" evidence="3">
    <location>
        <begin position="683"/>
        <end position="695"/>
    </location>
</feature>
<feature type="modified residue" description="Phosphoserine" evidence="5">
    <location>
        <position position="212"/>
    </location>
</feature>
<feature type="modified residue" description="Phosphoserine" evidence="5">
    <location>
        <position position="216"/>
    </location>
</feature>
<feature type="modified residue" description="Phosphoserine" evidence="5">
    <location>
        <position position="218"/>
    </location>
</feature>
<feature type="modified residue" description="Phosphoserine" evidence="5">
    <location>
        <position position="223"/>
    </location>
</feature>
<feature type="modified residue" description="Phosphoserine" evidence="5">
    <location>
        <position position="255"/>
    </location>
</feature>
<feature type="modified residue" description="Phosphothreonine" evidence="5">
    <location>
        <position position="406"/>
    </location>
</feature>
<feature type="mutagenesis site" description="Aberrant cell morphology and depolarization of F-actin." evidence="4">
    <original>G</original>
    <variation>S</variation>
    <location>
        <position position="86"/>
    </location>
</feature>
<feature type="mutagenesis site" description="Aberrant cell morphology and depolarization of F-actin." evidence="4">
    <original>T</original>
    <variation>A</variation>
    <location>
        <position position="103"/>
    </location>
</feature>